<sequence length="335" mass="37160">MAKRYLLDFEKPLVELEKQIEQIKELARDSEVDVSQQLLQLETLAARRREEIFKSLTPAQKIQVARHPQRPSTLDFVQMFCDDWIELHGDRNGGDDMALIGGIGSINNRPVLMLGHQKGRDTKENVVRNFGMAKPGGYRKALRLMQHANRFSLPILTFIDTPGAYAGLKAEEHGQGEAIARNLREMFGLKVPIVATVIGEGGSGGALGIGVADRLLMFEHSVYTVASPEACASILWRDAAKAPEAASALKITGKDLLKLGIIDEVLPEPSGGNNWAPLDAGNTLKEAIEKHLNALLKMPEDELIEERYKKFRVLGKFIEANNIEEIYSEIPQKTE</sequence>
<comment type="function">
    <text evidence="1">Component of the acetyl coenzyme A carboxylase (ACC) complex. First, biotin carboxylase catalyzes the carboxylation of biotin on its carrier protein (BCCP) and then the CO(2) group is transferred by the carboxyltransferase to acetyl-CoA to form malonyl-CoA.</text>
</comment>
<comment type="catalytic activity">
    <reaction evidence="1">
        <text>N(6)-carboxybiotinyl-L-lysyl-[protein] + acetyl-CoA = N(6)-biotinyl-L-lysyl-[protein] + malonyl-CoA</text>
        <dbReference type="Rhea" id="RHEA:54728"/>
        <dbReference type="Rhea" id="RHEA-COMP:10505"/>
        <dbReference type="Rhea" id="RHEA-COMP:10506"/>
        <dbReference type="ChEBI" id="CHEBI:57288"/>
        <dbReference type="ChEBI" id="CHEBI:57384"/>
        <dbReference type="ChEBI" id="CHEBI:83144"/>
        <dbReference type="ChEBI" id="CHEBI:83145"/>
        <dbReference type="EC" id="2.1.3.15"/>
    </reaction>
</comment>
<comment type="pathway">
    <text evidence="1">Lipid metabolism; malonyl-CoA biosynthesis; malonyl-CoA from acetyl-CoA: step 1/1.</text>
</comment>
<comment type="subunit">
    <text evidence="1">Acetyl-CoA carboxylase is a heterohexamer composed of biotin carboxyl carrier protein (AccB), biotin carboxylase (AccC) and two subunits each of ACCase subunit alpha (AccA) and ACCase subunit beta (AccD).</text>
</comment>
<comment type="subcellular location">
    <subcellularLocation>
        <location evidence="1">Cytoplasm</location>
    </subcellularLocation>
</comment>
<comment type="similarity">
    <text evidence="1">Belongs to the AccA family.</text>
</comment>
<dbReference type="EC" id="2.1.3.15" evidence="1"/>
<dbReference type="EMBL" id="CP000576">
    <property type="protein sequence ID" value="ABO17183.1"/>
    <property type="molecule type" value="Genomic_DNA"/>
</dbReference>
<dbReference type="RefSeq" id="WP_011862553.1">
    <property type="nucleotide sequence ID" value="NC_009091.1"/>
</dbReference>
<dbReference type="SMR" id="A3PBQ8"/>
<dbReference type="STRING" id="167546.P9301_05601"/>
<dbReference type="KEGG" id="pmg:P9301_05601"/>
<dbReference type="eggNOG" id="COG0825">
    <property type="taxonomic scope" value="Bacteria"/>
</dbReference>
<dbReference type="HOGENOM" id="CLU_015486_0_2_3"/>
<dbReference type="OrthoDB" id="9808023at2"/>
<dbReference type="UniPathway" id="UPA00655">
    <property type="reaction ID" value="UER00711"/>
</dbReference>
<dbReference type="Proteomes" id="UP000001430">
    <property type="component" value="Chromosome"/>
</dbReference>
<dbReference type="GO" id="GO:0009317">
    <property type="term" value="C:acetyl-CoA carboxylase complex"/>
    <property type="evidence" value="ECO:0007669"/>
    <property type="project" value="InterPro"/>
</dbReference>
<dbReference type="GO" id="GO:0003989">
    <property type="term" value="F:acetyl-CoA carboxylase activity"/>
    <property type="evidence" value="ECO:0007669"/>
    <property type="project" value="InterPro"/>
</dbReference>
<dbReference type="GO" id="GO:0005524">
    <property type="term" value="F:ATP binding"/>
    <property type="evidence" value="ECO:0007669"/>
    <property type="project" value="UniProtKB-KW"/>
</dbReference>
<dbReference type="GO" id="GO:0016743">
    <property type="term" value="F:carboxyl- or carbamoyltransferase activity"/>
    <property type="evidence" value="ECO:0007669"/>
    <property type="project" value="UniProtKB-UniRule"/>
</dbReference>
<dbReference type="GO" id="GO:0006633">
    <property type="term" value="P:fatty acid biosynthetic process"/>
    <property type="evidence" value="ECO:0007669"/>
    <property type="project" value="UniProtKB-KW"/>
</dbReference>
<dbReference type="GO" id="GO:2001295">
    <property type="term" value="P:malonyl-CoA biosynthetic process"/>
    <property type="evidence" value="ECO:0007669"/>
    <property type="project" value="UniProtKB-UniRule"/>
</dbReference>
<dbReference type="Gene3D" id="3.90.226.10">
    <property type="entry name" value="2-enoyl-CoA Hydratase, Chain A, domain 1"/>
    <property type="match status" value="1"/>
</dbReference>
<dbReference type="HAMAP" id="MF_00823">
    <property type="entry name" value="AcetylCoA_CT_alpha"/>
    <property type="match status" value="1"/>
</dbReference>
<dbReference type="InterPro" id="IPR001095">
    <property type="entry name" value="Acetyl_CoA_COase_a_su"/>
</dbReference>
<dbReference type="InterPro" id="IPR029045">
    <property type="entry name" value="ClpP/crotonase-like_dom_sf"/>
</dbReference>
<dbReference type="InterPro" id="IPR011763">
    <property type="entry name" value="COA_CT_C"/>
</dbReference>
<dbReference type="NCBIfam" id="TIGR00513">
    <property type="entry name" value="accA"/>
    <property type="match status" value="1"/>
</dbReference>
<dbReference type="NCBIfam" id="NF041504">
    <property type="entry name" value="AccA_sub"/>
    <property type="match status" value="1"/>
</dbReference>
<dbReference type="NCBIfam" id="NF004344">
    <property type="entry name" value="PRK05724.1"/>
    <property type="match status" value="1"/>
</dbReference>
<dbReference type="PANTHER" id="PTHR42853">
    <property type="entry name" value="ACETYL-COENZYME A CARBOXYLASE CARBOXYL TRANSFERASE SUBUNIT ALPHA"/>
    <property type="match status" value="1"/>
</dbReference>
<dbReference type="PANTHER" id="PTHR42853:SF3">
    <property type="entry name" value="ACETYL-COENZYME A CARBOXYLASE CARBOXYL TRANSFERASE SUBUNIT ALPHA, CHLOROPLASTIC"/>
    <property type="match status" value="1"/>
</dbReference>
<dbReference type="Pfam" id="PF03255">
    <property type="entry name" value="ACCA"/>
    <property type="match status" value="1"/>
</dbReference>
<dbReference type="PRINTS" id="PR01069">
    <property type="entry name" value="ACCCTRFRASEA"/>
</dbReference>
<dbReference type="SUPFAM" id="SSF52096">
    <property type="entry name" value="ClpP/crotonase"/>
    <property type="match status" value="1"/>
</dbReference>
<dbReference type="PROSITE" id="PS50989">
    <property type="entry name" value="COA_CT_CTER"/>
    <property type="match status" value="1"/>
</dbReference>
<gene>
    <name evidence="1" type="primary">accA</name>
    <name type="ordered locus">P9301_05601</name>
</gene>
<reference key="1">
    <citation type="journal article" date="2007" name="PLoS Genet.">
        <title>Patterns and implications of gene gain and loss in the evolution of Prochlorococcus.</title>
        <authorList>
            <person name="Kettler G.C."/>
            <person name="Martiny A.C."/>
            <person name="Huang K."/>
            <person name="Zucker J."/>
            <person name="Coleman M.L."/>
            <person name="Rodrigue S."/>
            <person name="Chen F."/>
            <person name="Lapidus A."/>
            <person name="Ferriera S."/>
            <person name="Johnson J."/>
            <person name="Steglich C."/>
            <person name="Church G.M."/>
            <person name="Richardson P."/>
            <person name="Chisholm S.W."/>
        </authorList>
    </citation>
    <scope>NUCLEOTIDE SEQUENCE [LARGE SCALE GENOMIC DNA]</scope>
    <source>
        <strain>MIT 9301</strain>
    </source>
</reference>
<name>ACCA_PROM0</name>
<accession>A3PBQ8</accession>
<organism>
    <name type="scientific">Prochlorococcus marinus (strain MIT 9301)</name>
    <dbReference type="NCBI Taxonomy" id="167546"/>
    <lineage>
        <taxon>Bacteria</taxon>
        <taxon>Bacillati</taxon>
        <taxon>Cyanobacteriota</taxon>
        <taxon>Cyanophyceae</taxon>
        <taxon>Synechococcales</taxon>
        <taxon>Prochlorococcaceae</taxon>
        <taxon>Prochlorococcus</taxon>
    </lineage>
</organism>
<evidence type="ECO:0000255" key="1">
    <source>
        <dbReference type="HAMAP-Rule" id="MF_00823"/>
    </source>
</evidence>
<evidence type="ECO:0000255" key="2">
    <source>
        <dbReference type="PROSITE-ProRule" id="PRU01137"/>
    </source>
</evidence>
<proteinExistence type="inferred from homology"/>
<protein>
    <recommendedName>
        <fullName evidence="1">Acetyl-coenzyme A carboxylase carboxyl transferase subunit alpha</fullName>
        <shortName evidence="1">ACCase subunit alpha</shortName>
        <shortName evidence="1">Acetyl-CoA carboxylase carboxyltransferase subunit alpha</shortName>
        <ecNumber evidence="1">2.1.3.15</ecNumber>
    </recommendedName>
</protein>
<feature type="chain" id="PRO_1000062647" description="Acetyl-coenzyme A carboxylase carboxyl transferase subunit alpha">
    <location>
        <begin position="1"/>
        <end position="335"/>
    </location>
</feature>
<feature type="domain" description="CoA carboxyltransferase C-terminal" evidence="2">
    <location>
        <begin position="40"/>
        <end position="294"/>
    </location>
</feature>
<keyword id="KW-0067">ATP-binding</keyword>
<keyword id="KW-0963">Cytoplasm</keyword>
<keyword id="KW-0275">Fatty acid biosynthesis</keyword>
<keyword id="KW-0276">Fatty acid metabolism</keyword>
<keyword id="KW-0444">Lipid biosynthesis</keyword>
<keyword id="KW-0443">Lipid metabolism</keyword>
<keyword id="KW-0547">Nucleotide-binding</keyword>
<keyword id="KW-1185">Reference proteome</keyword>
<keyword id="KW-0808">Transferase</keyword>